<accession>Q8HXY5</accession>
<sequence length="484" mass="54894">MAAVGDHGSPDSYRSPLASRYASPEMCFVFSDRYKFRTWRQLWLWLAEAEQTLGLPITDEQIQEMKSNLDNIDFKMAAEEEKRLRHDVMAHVHTFGHCCPKAAGIIHLGATSCYVGDNTDLIILRNALDLLLPKLARVISRLADFAKERASLPTLGFTHFQPAQLTTVGKRCCLWIQDLCMDLQNLKRVRDDLRFRGVKGTTGTQASFLQLFEGDDHKVEQLDKMVTDKAGFKRAFIITGQTYTRKVDIEVLSVLASLGASVHKICTDIRLLANLKEMEEPFEKQQIGSSAMPYKRNPMRSERCCSLARHLMTLVMDPLQTASVQWFERTLDDSANRRICLAEAFLTADTILNTLQNISEGLVVYPKVIERRIRQELPFMATENIIMAMVKAGGSRQDCHEKIRVLSQQAASVVKQEGGDNDLIERIQADAYFSPIHSQLDRLLDPSSFTGRASQQVQRFLEEEVYPLLKPYESVMKVKAELCL</sequence>
<protein>
    <recommendedName>
        <fullName>Adenylosuccinate lyase</fullName>
        <shortName>ADSL</shortName>
        <shortName>ASL</shortName>
        <ecNumber evidence="2">4.3.2.2</ecNumber>
    </recommendedName>
    <alternativeName>
        <fullName>Adenylosuccinase</fullName>
        <shortName>ASase</shortName>
    </alternativeName>
</protein>
<proteinExistence type="evidence at transcript level"/>
<organism>
    <name type="scientific">Macaca fascicularis</name>
    <name type="common">Crab-eating macaque</name>
    <name type="synonym">Cynomolgus monkey</name>
    <dbReference type="NCBI Taxonomy" id="9541"/>
    <lineage>
        <taxon>Eukaryota</taxon>
        <taxon>Metazoa</taxon>
        <taxon>Chordata</taxon>
        <taxon>Craniata</taxon>
        <taxon>Vertebrata</taxon>
        <taxon>Euteleostomi</taxon>
        <taxon>Mammalia</taxon>
        <taxon>Eutheria</taxon>
        <taxon>Euarchontoglires</taxon>
        <taxon>Primates</taxon>
        <taxon>Haplorrhini</taxon>
        <taxon>Catarrhini</taxon>
        <taxon>Cercopithecidae</taxon>
        <taxon>Cercopithecinae</taxon>
        <taxon>Macaca</taxon>
    </lineage>
</organism>
<keyword id="KW-0007">Acetylation</keyword>
<keyword id="KW-1017">Isopeptide bond</keyword>
<keyword id="KW-0456">Lyase</keyword>
<keyword id="KW-0658">Purine biosynthesis</keyword>
<keyword id="KW-1185">Reference proteome</keyword>
<keyword id="KW-0832">Ubl conjugation</keyword>
<comment type="function">
    <text evidence="2">Catalyzes two non-sequential steps in de novo AMP synthesis: converts (S)-2-(5-amino-1-(5-phospho-D-ribosyl)imidazole-4-carboxamido)succinate (SAICAR) to fumarate plus 5-amino-1-(5-phospho-D-ribosyl)imidazole-4-carboxamide, and thereby also contributes to de novo IMP synthesis, and converts succinyladenosine monophosphate (SAMP) to AMP and fumarate.</text>
</comment>
<comment type="catalytic activity">
    <reaction evidence="2">
        <text>N(6)-(1,2-dicarboxyethyl)-AMP = fumarate + AMP</text>
        <dbReference type="Rhea" id="RHEA:16853"/>
        <dbReference type="ChEBI" id="CHEBI:29806"/>
        <dbReference type="ChEBI" id="CHEBI:57567"/>
        <dbReference type="ChEBI" id="CHEBI:456215"/>
        <dbReference type="EC" id="4.3.2.2"/>
    </reaction>
</comment>
<comment type="catalytic activity">
    <reaction evidence="2">
        <text>(2S)-2-[5-amino-1-(5-phospho-beta-D-ribosyl)imidazole-4-carboxamido]succinate = 5-amino-1-(5-phospho-beta-D-ribosyl)imidazole-4-carboxamide + fumarate</text>
        <dbReference type="Rhea" id="RHEA:23920"/>
        <dbReference type="ChEBI" id="CHEBI:29806"/>
        <dbReference type="ChEBI" id="CHEBI:58443"/>
        <dbReference type="ChEBI" id="CHEBI:58475"/>
        <dbReference type="EC" id="4.3.2.2"/>
    </reaction>
</comment>
<comment type="pathway">
    <text>Purine metabolism; AMP biosynthesis via de novo pathway; AMP from IMP: step 2/2.</text>
</comment>
<comment type="pathway">
    <text>Purine metabolism; IMP biosynthesis via de novo pathway; 5-amino-1-(5-phospho-D-ribosyl)imidazole-4-carboxamide from 5-amino-1-(5-phospho-D-ribosyl)imidazole-4-carboxylate: step 2/2.</text>
</comment>
<comment type="subunit">
    <text evidence="2">Homotetramer. Residues from neighboring subunits contribute catalytic and substrate-binding residues to each active site.</text>
</comment>
<comment type="similarity">
    <text evidence="3">Belongs to the lyase 1 family. Adenylosuccinate lyase subfamily.</text>
</comment>
<dbReference type="EC" id="4.3.2.2" evidence="2"/>
<dbReference type="EMBL" id="AB083304">
    <property type="protein sequence ID" value="BAC20583.1"/>
    <property type="molecule type" value="mRNA"/>
</dbReference>
<dbReference type="SMR" id="Q8HXY5"/>
<dbReference type="STRING" id="9541.ENSMFAP00000043930"/>
<dbReference type="VEuPathDB" id="HostDB:ENSMFAG00000039307"/>
<dbReference type="eggNOG" id="KOG2700">
    <property type="taxonomic scope" value="Eukaryota"/>
</dbReference>
<dbReference type="UniPathway" id="UPA00074">
    <property type="reaction ID" value="UER00132"/>
</dbReference>
<dbReference type="UniPathway" id="UPA00075">
    <property type="reaction ID" value="UER00336"/>
</dbReference>
<dbReference type="Proteomes" id="UP000233100">
    <property type="component" value="Chromosome 10"/>
</dbReference>
<dbReference type="GO" id="GO:0005829">
    <property type="term" value="C:cytosol"/>
    <property type="evidence" value="ECO:0007669"/>
    <property type="project" value="TreeGrafter"/>
</dbReference>
<dbReference type="GO" id="GO:0070626">
    <property type="term" value="F:(S)-2-(5-amino-1-(5-phospho-D-ribosyl)imidazole-4-carboxamido) succinate lyase (fumarate-forming) activity"/>
    <property type="evidence" value="ECO:0007669"/>
    <property type="project" value="TreeGrafter"/>
</dbReference>
<dbReference type="GO" id="GO:0004018">
    <property type="term" value="F:N6-(1,2-dicarboxyethyl)AMP AMP-lyase (fumarate-forming) activity"/>
    <property type="evidence" value="ECO:0007669"/>
    <property type="project" value="InterPro"/>
</dbReference>
<dbReference type="GO" id="GO:0044208">
    <property type="term" value="P:'de novo' AMP biosynthetic process"/>
    <property type="evidence" value="ECO:0007669"/>
    <property type="project" value="UniProtKB-UniPathway"/>
</dbReference>
<dbReference type="GO" id="GO:0006189">
    <property type="term" value="P:'de novo' IMP biosynthetic process"/>
    <property type="evidence" value="ECO:0007669"/>
    <property type="project" value="UniProtKB-UniPathway"/>
</dbReference>
<dbReference type="CDD" id="cd03302">
    <property type="entry name" value="Adenylsuccinate_lyase_2"/>
    <property type="match status" value="1"/>
</dbReference>
<dbReference type="FunFam" id="1.10.275.60:FF:000001">
    <property type="entry name" value="Adenylosuccinate lyase"/>
    <property type="match status" value="1"/>
</dbReference>
<dbReference type="FunFam" id="1.10.40.30:FF:000005">
    <property type="entry name" value="Adenylosuccinate lyase"/>
    <property type="match status" value="1"/>
</dbReference>
<dbReference type="Gene3D" id="1.10.275.60">
    <property type="match status" value="1"/>
</dbReference>
<dbReference type="Gene3D" id="1.10.40.30">
    <property type="entry name" value="Fumarase/aspartase (C-terminal domain)"/>
    <property type="match status" value="1"/>
</dbReference>
<dbReference type="Gene3D" id="1.20.200.10">
    <property type="entry name" value="Fumarase/aspartase (Central domain)"/>
    <property type="match status" value="1"/>
</dbReference>
<dbReference type="InterPro" id="IPR019468">
    <property type="entry name" value="AdenyloSucc_lyase_C"/>
</dbReference>
<dbReference type="InterPro" id="IPR020557">
    <property type="entry name" value="Fumarate_lyase_CS"/>
</dbReference>
<dbReference type="InterPro" id="IPR000362">
    <property type="entry name" value="Fumarate_lyase_fam"/>
</dbReference>
<dbReference type="InterPro" id="IPR022761">
    <property type="entry name" value="Fumarate_lyase_N"/>
</dbReference>
<dbReference type="InterPro" id="IPR008948">
    <property type="entry name" value="L-Aspartase-like"/>
</dbReference>
<dbReference type="InterPro" id="IPR004769">
    <property type="entry name" value="Pur_lyase"/>
</dbReference>
<dbReference type="NCBIfam" id="TIGR00928">
    <property type="entry name" value="purB"/>
    <property type="match status" value="1"/>
</dbReference>
<dbReference type="PANTHER" id="PTHR43172">
    <property type="entry name" value="ADENYLOSUCCINATE LYASE"/>
    <property type="match status" value="1"/>
</dbReference>
<dbReference type="PANTHER" id="PTHR43172:SF1">
    <property type="entry name" value="ADENYLOSUCCINATE LYASE"/>
    <property type="match status" value="1"/>
</dbReference>
<dbReference type="Pfam" id="PF10397">
    <property type="entry name" value="ADSL_C"/>
    <property type="match status" value="1"/>
</dbReference>
<dbReference type="Pfam" id="PF00206">
    <property type="entry name" value="Lyase_1"/>
    <property type="match status" value="1"/>
</dbReference>
<dbReference type="PRINTS" id="PR00145">
    <property type="entry name" value="ARGSUCLYASE"/>
</dbReference>
<dbReference type="PRINTS" id="PR00149">
    <property type="entry name" value="FUMRATELYASE"/>
</dbReference>
<dbReference type="SMART" id="SM00998">
    <property type="entry name" value="ADSL_C"/>
    <property type="match status" value="1"/>
</dbReference>
<dbReference type="SUPFAM" id="SSF48557">
    <property type="entry name" value="L-aspartase-like"/>
    <property type="match status" value="1"/>
</dbReference>
<dbReference type="PROSITE" id="PS00163">
    <property type="entry name" value="FUMARATE_LYASES"/>
    <property type="match status" value="1"/>
</dbReference>
<reference key="1">
    <citation type="submission" date="2002-04" db="EMBL/GenBank/DDBJ databases">
        <title>Isolation and characterization of cDNA for macaque neurological disease genes.</title>
        <authorList>
            <person name="Kusuda J."/>
            <person name="Osada N."/>
            <person name="Hida M."/>
            <person name="Sugano S."/>
            <person name="Hashimoto K."/>
        </authorList>
    </citation>
    <scope>NUCLEOTIDE SEQUENCE [LARGE SCALE MRNA]</scope>
    <source>
        <tissue>Frontal cortex</tissue>
    </source>
</reference>
<feature type="initiator methionine" description="Removed" evidence="2">
    <location>
        <position position="1"/>
    </location>
</feature>
<feature type="chain" id="PRO_0000137893" description="Adenylosuccinate lyase">
    <location>
        <begin position="2"/>
        <end position="484"/>
    </location>
</feature>
<feature type="active site" description="Proton donor/acceptor" evidence="1">
    <location>
        <position position="159"/>
    </location>
</feature>
<feature type="active site" description="Proton donor/acceptor" evidence="1">
    <location>
        <position position="289"/>
    </location>
</feature>
<feature type="binding site" evidence="1">
    <location>
        <begin position="20"/>
        <end position="21"/>
    </location>
    <ligand>
        <name>substrate</name>
        <note>ligand shared between two neighboring subunits</note>
    </ligand>
</feature>
<feature type="binding site" description="in other chain" evidence="1">
    <location>
        <begin position="85"/>
        <end position="87"/>
    </location>
    <ligand>
        <name>substrate</name>
        <note>ligand shared between two neighboring subunits</note>
    </ligand>
</feature>
<feature type="binding site" description="in other chain" evidence="1">
    <location>
        <begin position="111"/>
        <end position="112"/>
    </location>
    <ligand>
        <name>substrate</name>
        <note>ligand shared between two neighboring subunits</note>
    </ligand>
</feature>
<feature type="binding site" description="in other chain" evidence="1">
    <location>
        <position position="241"/>
    </location>
    <ligand>
        <name>substrate</name>
        <note>ligand shared between two neighboring subunits</note>
    </ligand>
</feature>
<feature type="binding site" evidence="1">
    <location>
        <position position="303"/>
    </location>
    <ligand>
        <name>substrate</name>
        <note>ligand shared between two neighboring subunits</note>
    </ligand>
</feature>
<feature type="binding site" description="in other chain" evidence="1">
    <location>
        <position position="329"/>
    </location>
    <ligand>
        <name>substrate</name>
        <note>ligand shared between two neighboring subunits</note>
    </ligand>
</feature>
<feature type="binding site" description="in other chain" evidence="1">
    <location>
        <position position="334"/>
    </location>
    <ligand>
        <name>substrate</name>
        <note>ligand shared between two neighboring subunits</note>
    </ligand>
</feature>
<feature type="binding site" description="in other chain" evidence="1">
    <location>
        <position position="338"/>
    </location>
    <ligand>
        <name>substrate</name>
        <note>ligand shared between two neighboring subunits</note>
    </ligand>
</feature>
<feature type="modified residue" description="N-acetylalanine" evidence="2">
    <location>
        <position position="2"/>
    </location>
</feature>
<feature type="modified residue" description="N6-acetyllysine" evidence="2">
    <location>
        <position position="147"/>
    </location>
</feature>
<feature type="modified residue" description="N6-acetyllysine" evidence="2">
    <location>
        <position position="295"/>
    </location>
</feature>
<feature type="cross-link" description="Glycyl lysine isopeptide (Lys-Gly) (interchain with G-Cter in SUMO1)" evidence="2">
    <location>
        <position position="415"/>
    </location>
</feature>
<gene>
    <name type="primary">ADSL</name>
    <name type="ORF">QflA-14811</name>
</gene>
<evidence type="ECO:0000250" key="1"/>
<evidence type="ECO:0000250" key="2">
    <source>
        <dbReference type="UniProtKB" id="P30566"/>
    </source>
</evidence>
<evidence type="ECO:0000305" key="3"/>
<name>PUR8_MACFA</name>